<evidence type="ECO:0000255" key="1">
    <source>
        <dbReference type="HAMAP-Rule" id="MF_00272"/>
    </source>
</evidence>
<evidence type="ECO:0000255" key="2">
    <source>
        <dbReference type="PROSITE-ProRule" id="PRU01066"/>
    </source>
</evidence>
<protein>
    <recommendedName>
        <fullName evidence="1">Glycine cleavage system H protein</fullName>
    </recommendedName>
</protein>
<dbReference type="EMBL" id="CP000951">
    <property type="protein sequence ID" value="ACA98361.1"/>
    <property type="molecule type" value="Genomic_DNA"/>
</dbReference>
<dbReference type="RefSeq" id="WP_012305985.1">
    <property type="nucleotide sequence ID" value="NZ_JAHHPU010000004.1"/>
</dbReference>
<dbReference type="SMR" id="B1XNI3"/>
<dbReference type="STRING" id="32049.SYNPCC7002_A0351"/>
<dbReference type="KEGG" id="syp:SYNPCC7002_A0351"/>
<dbReference type="eggNOG" id="COG0509">
    <property type="taxonomic scope" value="Bacteria"/>
</dbReference>
<dbReference type="HOGENOM" id="CLU_097408_2_2_3"/>
<dbReference type="Proteomes" id="UP000001688">
    <property type="component" value="Chromosome"/>
</dbReference>
<dbReference type="GO" id="GO:0005829">
    <property type="term" value="C:cytosol"/>
    <property type="evidence" value="ECO:0007669"/>
    <property type="project" value="TreeGrafter"/>
</dbReference>
<dbReference type="GO" id="GO:0005960">
    <property type="term" value="C:glycine cleavage complex"/>
    <property type="evidence" value="ECO:0007669"/>
    <property type="project" value="InterPro"/>
</dbReference>
<dbReference type="GO" id="GO:0019464">
    <property type="term" value="P:glycine decarboxylation via glycine cleavage system"/>
    <property type="evidence" value="ECO:0007669"/>
    <property type="project" value="UniProtKB-UniRule"/>
</dbReference>
<dbReference type="CDD" id="cd06848">
    <property type="entry name" value="GCS_H"/>
    <property type="match status" value="1"/>
</dbReference>
<dbReference type="Gene3D" id="2.40.50.100">
    <property type="match status" value="1"/>
</dbReference>
<dbReference type="HAMAP" id="MF_00272">
    <property type="entry name" value="GcvH"/>
    <property type="match status" value="1"/>
</dbReference>
<dbReference type="InterPro" id="IPR003016">
    <property type="entry name" value="2-oxoA_DH_lipoyl-BS"/>
</dbReference>
<dbReference type="InterPro" id="IPR000089">
    <property type="entry name" value="Biotin_lipoyl"/>
</dbReference>
<dbReference type="InterPro" id="IPR002930">
    <property type="entry name" value="GCV_H"/>
</dbReference>
<dbReference type="InterPro" id="IPR033753">
    <property type="entry name" value="GCV_H/Fam206"/>
</dbReference>
<dbReference type="InterPro" id="IPR017453">
    <property type="entry name" value="GCV_H_sub"/>
</dbReference>
<dbReference type="InterPro" id="IPR011053">
    <property type="entry name" value="Single_hybrid_motif"/>
</dbReference>
<dbReference type="NCBIfam" id="TIGR00527">
    <property type="entry name" value="gcvH"/>
    <property type="match status" value="1"/>
</dbReference>
<dbReference type="NCBIfam" id="NF002270">
    <property type="entry name" value="PRK01202.1"/>
    <property type="match status" value="1"/>
</dbReference>
<dbReference type="PANTHER" id="PTHR11715">
    <property type="entry name" value="GLYCINE CLEAVAGE SYSTEM H PROTEIN"/>
    <property type="match status" value="1"/>
</dbReference>
<dbReference type="PANTHER" id="PTHR11715:SF3">
    <property type="entry name" value="GLYCINE CLEAVAGE SYSTEM H PROTEIN-RELATED"/>
    <property type="match status" value="1"/>
</dbReference>
<dbReference type="Pfam" id="PF01597">
    <property type="entry name" value="GCV_H"/>
    <property type="match status" value="1"/>
</dbReference>
<dbReference type="SUPFAM" id="SSF51230">
    <property type="entry name" value="Single hybrid motif"/>
    <property type="match status" value="1"/>
</dbReference>
<dbReference type="PROSITE" id="PS50968">
    <property type="entry name" value="BIOTINYL_LIPOYL"/>
    <property type="match status" value="1"/>
</dbReference>
<dbReference type="PROSITE" id="PS00189">
    <property type="entry name" value="LIPOYL"/>
    <property type="match status" value="1"/>
</dbReference>
<keyword id="KW-0450">Lipoyl</keyword>
<keyword id="KW-1185">Reference proteome</keyword>
<proteinExistence type="inferred from homology"/>
<name>GCSH_PICP2</name>
<reference key="1">
    <citation type="submission" date="2008-02" db="EMBL/GenBank/DDBJ databases">
        <title>Complete sequence of Synechococcus sp. PCC 7002.</title>
        <authorList>
            <person name="Li T."/>
            <person name="Zhao J."/>
            <person name="Zhao C."/>
            <person name="Liu Z."/>
            <person name="Zhao F."/>
            <person name="Marquardt J."/>
            <person name="Nomura C.T."/>
            <person name="Persson S."/>
            <person name="Detter J.C."/>
            <person name="Richardson P.M."/>
            <person name="Lanz C."/>
            <person name="Schuster S.C."/>
            <person name="Wang J."/>
            <person name="Li S."/>
            <person name="Huang X."/>
            <person name="Cai T."/>
            <person name="Yu Z."/>
            <person name="Luo J."/>
            <person name="Zhao J."/>
            <person name="Bryant D.A."/>
        </authorList>
    </citation>
    <scope>NUCLEOTIDE SEQUENCE [LARGE SCALE GENOMIC DNA]</scope>
    <source>
        <strain>ATCC 27264 / PCC 7002 / PR-6</strain>
    </source>
</reference>
<comment type="function">
    <text evidence="1">The glycine cleavage system catalyzes the degradation of glycine. The H protein shuttles the methylamine group of glycine from the P protein to the T protein.</text>
</comment>
<comment type="cofactor">
    <cofactor evidence="1">
        <name>(R)-lipoate</name>
        <dbReference type="ChEBI" id="CHEBI:83088"/>
    </cofactor>
    <text evidence="1">Binds 1 lipoyl cofactor covalently.</text>
</comment>
<comment type="subunit">
    <text evidence="1">The glycine cleavage system is composed of four proteins: P, T, L and H.</text>
</comment>
<comment type="similarity">
    <text evidence="1">Belongs to the GcvH family.</text>
</comment>
<feature type="chain" id="PRO_1000114556" description="Glycine cleavage system H protein">
    <location>
        <begin position="1"/>
        <end position="132"/>
    </location>
</feature>
<feature type="domain" description="Lipoyl-binding" evidence="2">
    <location>
        <begin position="24"/>
        <end position="106"/>
    </location>
</feature>
<feature type="modified residue" description="N6-lipoyllysine" evidence="1">
    <location>
        <position position="65"/>
    </location>
</feature>
<accession>B1XNI3</accession>
<gene>
    <name evidence="1" type="primary">gcvH</name>
    <name type="ordered locus">SYNPCC7002_A0351</name>
</gene>
<organism>
    <name type="scientific">Picosynechococcus sp. (strain ATCC 27264 / PCC 7002 / PR-6)</name>
    <name type="common">Agmenellum quadruplicatum</name>
    <dbReference type="NCBI Taxonomy" id="32049"/>
    <lineage>
        <taxon>Bacteria</taxon>
        <taxon>Bacillati</taxon>
        <taxon>Cyanobacteriota</taxon>
        <taxon>Cyanophyceae</taxon>
        <taxon>Oscillatoriophycideae</taxon>
        <taxon>Chroococcales</taxon>
        <taxon>Geminocystaceae</taxon>
        <taxon>Picosynechococcus</taxon>
    </lineage>
</organism>
<sequence>MELEYPDDLRYLDSHEYIRLDGEIATIGLSAHAIDELGDIVFLELPEEGDAIVVGETFGSIESVKAVEDLYAPISGTVIDRNEALIQSPEMVSEDPYEEGWFIKVRVDNLDDEMLAETMTAEEYRLQVAGEE</sequence>